<protein>
    <recommendedName>
        <fullName>Uncharacterized protein AF_1547</fullName>
    </recommendedName>
</protein>
<reference key="1">
    <citation type="journal article" date="1997" name="Nature">
        <title>The complete genome sequence of the hyperthermophilic, sulphate-reducing archaeon Archaeoglobus fulgidus.</title>
        <authorList>
            <person name="Klenk H.-P."/>
            <person name="Clayton R.A."/>
            <person name="Tomb J.-F."/>
            <person name="White O."/>
            <person name="Nelson K.E."/>
            <person name="Ketchum K.A."/>
            <person name="Dodson R.J."/>
            <person name="Gwinn M.L."/>
            <person name="Hickey E.K."/>
            <person name="Peterson J.D."/>
            <person name="Richardson D.L."/>
            <person name="Kerlavage A.R."/>
            <person name="Graham D.E."/>
            <person name="Kyrpides N.C."/>
            <person name="Fleischmann R.D."/>
            <person name="Quackenbush J."/>
            <person name="Lee N.H."/>
            <person name="Sutton G.G."/>
            <person name="Gill S.R."/>
            <person name="Kirkness E.F."/>
            <person name="Dougherty B.A."/>
            <person name="McKenney K."/>
            <person name="Adams M.D."/>
            <person name="Loftus B.J."/>
            <person name="Peterson S.N."/>
            <person name="Reich C.I."/>
            <person name="McNeil L.K."/>
            <person name="Badger J.H."/>
            <person name="Glodek A."/>
            <person name="Zhou L."/>
            <person name="Overbeek R."/>
            <person name="Gocayne J.D."/>
            <person name="Weidman J.F."/>
            <person name="McDonald L.A."/>
            <person name="Utterback T.R."/>
            <person name="Cotton M.D."/>
            <person name="Spriggs T."/>
            <person name="Artiach P."/>
            <person name="Kaine B.P."/>
            <person name="Sykes S.M."/>
            <person name="Sadow P.W."/>
            <person name="D'Andrea K.P."/>
            <person name="Bowman C."/>
            <person name="Fujii C."/>
            <person name="Garland S.A."/>
            <person name="Mason T.M."/>
            <person name="Olsen G.J."/>
            <person name="Fraser C.M."/>
            <person name="Smith H.O."/>
            <person name="Woese C.R."/>
            <person name="Venter J.C."/>
        </authorList>
    </citation>
    <scope>NUCLEOTIDE SEQUENCE [LARGE SCALE GENOMIC DNA]</scope>
    <source>
        <strain>ATCC 49558 / DSM 4304 / JCM 9628 / NBRC 100126 / VC-16</strain>
    </source>
</reference>
<name>Y1547_ARCFU</name>
<gene>
    <name type="ordered locus">AF_1547</name>
</gene>
<proteinExistence type="predicted"/>
<accession>O28725</accession>
<organism>
    <name type="scientific">Archaeoglobus fulgidus (strain ATCC 49558 / DSM 4304 / JCM 9628 / NBRC 100126 / VC-16)</name>
    <dbReference type="NCBI Taxonomy" id="224325"/>
    <lineage>
        <taxon>Archaea</taxon>
        <taxon>Methanobacteriati</taxon>
        <taxon>Methanobacteriota</taxon>
        <taxon>Archaeoglobi</taxon>
        <taxon>Archaeoglobales</taxon>
        <taxon>Archaeoglobaceae</taxon>
        <taxon>Archaeoglobus</taxon>
    </lineage>
</organism>
<dbReference type="EMBL" id="AE000782">
    <property type="protein sequence ID" value="AAB89712.1"/>
    <property type="molecule type" value="Genomic_DNA"/>
</dbReference>
<dbReference type="PIR" id="B69443">
    <property type="entry name" value="B69443"/>
</dbReference>
<dbReference type="SMR" id="O28725"/>
<dbReference type="STRING" id="224325.AF_1547"/>
<dbReference type="PaxDb" id="224325-AF_1547"/>
<dbReference type="EnsemblBacteria" id="AAB89712">
    <property type="protein sequence ID" value="AAB89712"/>
    <property type="gene ID" value="AF_1547"/>
</dbReference>
<dbReference type="KEGG" id="afu:AF_1547"/>
<dbReference type="eggNOG" id="arCOG03714">
    <property type="taxonomic scope" value="Archaea"/>
</dbReference>
<dbReference type="HOGENOM" id="CLU_3162901_0_0_2"/>
<dbReference type="Proteomes" id="UP000002199">
    <property type="component" value="Chromosome"/>
</dbReference>
<dbReference type="GO" id="GO:0005524">
    <property type="term" value="F:ATP binding"/>
    <property type="evidence" value="ECO:0007669"/>
    <property type="project" value="UniProtKB-KW"/>
</dbReference>
<dbReference type="InterPro" id="IPR005144">
    <property type="entry name" value="ATP-cone_dom"/>
</dbReference>
<dbReference type="Pfam" id="PF03477">
    <property type="entry name" value="ATP-cone"/>
    <property type="match status" value="1"/>
</dbReference>
<dbReference type="PROSITE" id="PS51161">
    <property type="entry name" value="ATP_CONE"/>
    <property type="match status" value="1"/>
</dbReference>
<keyword id="KW-0067">ATP-binding</keyword>
<keyword id="KW-0547">Nucleotide-binding</keyword>
<keyword id="KW-1185">Reference proteome</keyword>
<evidence type="ECO:0000255" key="1">
    <source>
        <dbReference type="PROSITE-ProRule" id="PRU00492"/>
    </source>
</evidence>
<sequence length="47" mass="5409">MLRVRKRDGRLEEFSRAKIVRTCLRAGASKKIAEKVAEELKRGYTMG</sequence>
<feature type="chain" id="PRO_0000128018" description="Uncharacterized protein AF_1547">
    <location>
        <begin position="1"/>
        <end position="47"/>
    </location>
</feature>
<feature type="domain" description="ATP-cone" evidence="1">
    <location>
        <begin position="2"/>
        <end position="47"/>
    </location>
</feature>